<proteinExistence type="inferred from homology"/>
<accession>Q8FKF5</accession>
<reference key="1">
    <citation type="journal article" date="2002" name="Proc. Natl. Acad. Sci. U.S.A.">
        <title>Extensive mosaic structure revealed by the complete genome sequence of uropathogenic Escherichia coli.</title>
        <authorList>
            <person name="Welch R.A."/>
            <person name="Burland V."/>
            <person name="Plunkett G. III"/>
            <person name="Redford P."/>
            <person name="Roesch P."/>
            <person name="Rasko D."/>
            <person name="Buckles E.L."/>
            <person name="Liou S.-R."/>
            <person name="Boutin A."/>
            <person name="Hackett J."/>
            <person name="Stroud D."/>
            <person name="Mayhew G.F."/>
            <person name="Rose D.J."/>
            <person name="Zhou S."/>
            <person name="Schwartz D.C."/>
            <person name="Perna N.T."/>
            <person name="Mobley H.L.T."/>
            <person name="Donnenberg M.S."/>
            <person name="Blattner F.R."/>
        </authorList>
    </citation>
    <scope>NUCLEOTIDE SEQUENCE [LARGE SCALE GENOMIC DNA]</scope>
    <source>
        <strain>CFT073 / ATCC 700928 / UPEC</strain>
    </source>
</reference>
<keyword id="KW-0067">ATP-binding</keyword>
<keyword id="KW-0997">Cell inner membrane</keyword>
<keyword id="KW-1003">Cell membrane</keyword>
<keyword id="KW-0472">Membrane</keyword>
<keyword id="KW-0547">Nucleotide-binding</keyword>
<keyword id="KW-1185">Reference proteome</keyword>
<keyword id="KW-1278">Translocase</keyword>
<keyword id="KW-0813">Transport</keyword>
<organism>
    <name type="scientific">Escherichia coli O6:H1 (strain CFT073 / ATCC 700928 / UPEC)</name>
    <dbReference type="NCBI Taxonomy" id="199310"/>
    <lineage>
        <taxon>Bacteria</taxon>
        <taxon>Pseudomonadati</taxon>
        <taxon>Pseudomonadota</taxon>
        <taxon>Gammaproteobacteria</taxon>
        <taxon>Enterobacterales</taxon>
        <taxon>Enterobacteriaceae</taxon>
        <taxon>Escherichia</taxon>
    </lineage>
</organism>
<feature type="chain" id="PRO_0000093009" description="Taurine import ATP-binding protein TauB">
    <location>
        <begin position="1"/>
        <end position="255"/>
    </location>
</feature>
<feature type="domain" description="ABC transporter" evidence="1">
    <location>
        <begin position="2"/>
        <end position="229"/>
    </location>
</feature>
<feature type="binding site" evidence="1">
    <location>
        <begin position="34"/>
        <end position="41"/>
    </location>
    <ligand>
        <name>ATP</name>
        <dbReference type="ChEBI" id="CHEBI:30616"/>
    </ligand>
</feature>
<gene>
    <name evidence="1" type="primary">tauB</name>
    <name type="ordered locus">c0473</name>
</gene>
<protein>
    <recommendedName>
        <fullName evidence="1">Taurine import ATP-binding protein TauB</fullName>
        <ecNumber evidence="1">7.6.2.7</ecNumber>
    </recommendedName>
</protein>
<evidence type="ECO:0000255" key="1">
    <source>
        <dbReference type="HAMAP-Rule" id="MF_01714"/>
    </source>
</evidence>
<comment type="function">
    <text evidence="1">Part of the ABC transporter complex TauABC involved in taurine import. Responsible for energy coupling to the transport system.</text>
</comment>
<comment type="catalytic activity">
    <reaction evidence="1">
        <text>taurine(out) + ATP + H2O = taurine(in) + ADP + phosphate + H(+)</text>
        <dbReference type="Rhea" id="RHEA:14613"/>
        <dbReference type="ChEBI" id="CHEBI:15377"/>
        <dbReference type="ChEBI" id="CHEBI:15378"/>
        <dbReference type="ChEBI" id="CHEBI:30616"/>
        <dbReference type="ChEBI" id="CHEBI:43474"/>
        <dbReference type="ChEBI" id="CHEBI:456216"/>
        <dbReference type="ChEBI" id="CHEBI:507393"/>
        <dbReference type="EC" id="7.6.2.7"/>
    </reaction>
</comment>
<comment type="subunit">
    <text evidence="1">The complex is composed of two ATP-binding proteins (TauB), two transmembrane proteins (TauC) and a solute-binding protein (TauA).</text>
</comment>
<comment type="subcellular location">
    <subcellularLocation>
        <location evidence="1">Cell inner membrane</location>
        <topology evidence="1">Peripheral membrane protein</topology>
    </subcellularLocation>
</comment>
<comment type="similarity">
    <text evidence="1">Belongs to the ABC transporter superfamily. Taurine importer (TC 3.A.1.17.1) family.</text>
</comment>
<dbReference type="EC" id="7.6.2.7" evidence="1"/>
<dbReference type="EMBL" id="AE014075">
    <property type="protein sequence ID" value="AAN78951.1"/>
    <property type="molecule type" value="Genomic_DNA"/>
</dbReference>
<dbReference type="RefSeq" id="WP_000939358.1">
    <property type="nucleotide sequence ID" value="NZ_CP051263.1"/>
</dbReference>
<dbReference type="SMR" id="Q8FKF5"/>
<dbReference type="STRING" id="199310.c0473"/>
<dbReference type="KEGG" id="ecc:c0473"/>
<dbReference type="eggNOG" id="COG4525">
    <property type="taxonomic scope" value="Bacteria"/>
</dbReference>
<dbReference type="HOGENOM" id="CLU_000604_1_22_6"/>
<dbReference type="BioCyc" id="ECOL199310:C0473-MONOMER"/>
<dbReference type="Proteomes" id="UP000001410">
    <property type="component" value="Chromosome"/>
</dbReference>
<dbReference type="GO" id="GO:0005886">
    <property type="term" value="C:plasma membrane"/>
    <property type="evidence" value="ECO:0007669"/>
    <property type="project" value="UniProtKB-SubCell"/>
</dbReference>
<dbReference type="GO" id="GO:0015411">
    <property type="term" value="F:ABC-type taurine transporter transporter activity"/>
    <property type="evidence" value="ECO:0007669"/>
    <property type="project" value="UniProtKB-EC"/>
</dbReference>
<dbReference type="GO" id="GO:0005524">
    <property type="term" value="F:ATP binding"/>
    <property type="evidence" value="ECO:0007669"/>
    <property type="project" value="UniProtKB-KW"/>
</dbReference>
<dbReference type="GO" id="GO:0016887">
    <property type="term" value="F:ATP hydrolysis activity"/>
    <property type="evidence" value="ECO:0007669"/>
    <property type="project" value="InterPro"/>
</dbReference>
<dbReference type="CDD" id="cd03293">
    <property type="entry name" value="ABC_NrtD_SsuB_transporters"/>
    <property type="match status" value="1"/>
</dbReference>
<dbReference type="FunFam" id="3.40.50.300:FF:000653">
    <property type="entry name" value="Aliphatic sulfonates import ATP-binding protein SsuB"/>
    <property type="match status" value="1"/>
</dbReference>
<dbReference type="Gene3D" id="3.40.50.300">
    <property type="entry name" value="P-loop containing nucleotide triphosphate hydrolases"/>
    <property type="match status" value="1"/>
</dbReference>
<dbReference type="InterPro" id="IPR003593">
    <property type="entry name" value="AAA+_ATPase"/>
</dbReference>
<dbReference type="InterPro" id="IPR003439">
    <property type="entry name" value="ABC_transporter-like_ATP-bd"/>
</dbReference>
<dbReference type="InterPro" id="IPR017871">
    <property type="entry name" value="ABC_transporter-like_CS"/>
</dbReference>
<dbReference type="InterPro" id="IPR050166">
    <property type="entry name" value="ABC_transporter_ATP-bind"/>
</dbReference>
<dbReference type="InterPro" id="IPR027417">
    <property type="entry name" value="P-loop_NTPase"/>
</dbReference>
<dbReference type="NCBIfam" id="NF008421">
    <property type="entry name" value="PRK11248.1"/>
    <property type="match status" value="1"/>
</dbReference>
<dbReference type="PANTHER" id="PTHR42788:SF18">
    <property type="entry name" value="TAURINE IMPORT ATP-BINDING PROTEIN TAUB"/>
    <property type="match status" value="1"/>
</dbReference>
<dbReference type="PANTHER" id="PTHR42788">
    <property type="entry name" value="TAURINE IMPORT ATP-BINDING PROTEIN-RELATED"/>
    <property type="match status" value="1"/>
</dbReference>
<dbReference type="Pfam" id="PF00005">
    <property type="entry name" value="ABC_tran"/>
    <property type="match status" value="1"/>
</dbReference>
<dbReference type="SMART" id="SM00382">
    <property type="entry name" value="AAA"/>
    <property type="match status" value="1"/>
</dbReference>
<dbReference type="SUPFAM" id="SSF52540">
    <property type="entry name" value="P-loop containing nucleoside triphosphate hydrolases"/>
    <property type="match status" value="1"/>
</dbReference>
<dbReference type="PROSITE" id="PS00211">
    <property type="entry name" value="ABC_TRANSPORTER_1"/>
    <property type="match status" value="1"/>
</dbReference>
<dbReference type="PROSITE" id="PS50893">
    <property type="entry name" value="ABC_TRANSPORTER_2"/>
    <property type="match status" value="1"/>
</dbReference>
<dbReference type="PROSITE" id="PS51250">
    <property type="entry name" value="TAUB"/>
    <property type="match status" value="1"/>
</dbReference>
<name>TAUB_ECOL6</name>
<sequence length="255" mass="28161">MLQISHLYADYGGKPALEDINLTLESGELLVVLGPSGCGKTTLLNLIAGFVPYQHGSIQLAGKGIQGPGAERGVVFQNEGLLPWRNVQDNVAFGLQLAGVEKMQRLEIAHQMVKKVGLEGAEKRYIWQLSGGQRQRVGIARALAANPQLLLLDEPFGALDAFTRDQIQTLLLKLWQETGKQVLLITHDIEEAVFMATELVLLSPGPGRVLERLPLNFARRFVAGESSRSIKSDPQFIAMREYVLSRVFEQREAFS</sequence>